<evidence type="ECO:0000255" key="1">
    <source>
        <dbReference type="HAMAP-Rule" id="MF_01341"/>
    </source>
</evidence>
<evidence type="ECO:0000256" key="2">
    <source>
        <dbReference type="SAM" id="MobiDB-lite"/>
    </source>
</evidence>
<evidence type="ECO:0000305" key="3"/>
<sequence>MNLSNLRAPRKANEKKKRVGRGMGSGMGKTSARGHKGQRSRSGSRMMRGFEGGQMPLHRRLPKRGFTNIFRVEYAVVNLDRLAELGLTEITPEVLIKHKLAGKNDKIKVLGNGEIKGAVTVRAHKFSKTAEEKIAKAGGKAEVL</sequence>
<gene>
    <name evidence="1" type="primary">rplO</name>
    <name type="ordered locus">Acid345_1245</name>
</gene>
<accession>Q1ISA3</accession>
<dbReference type="EMBL" id="CP000360">
    <property type="protein sequence ID" value="ABF40247.1"/>
    <property type="molecule type" value="Genomic_DNA"/>
</dbReference>
<dbReference type="RefSeq" id="WP_011522049.1">
    <property type="nucleotide sequence ID" value="NC_008009.1"/>
</dbReference>
<dbReference type="SMR" id="Q1ISA3"/>
<dbReference type="STRING" id="204669.Acid345_1245"/>
<dbReference type="EnsemblBacteria" id="ABF40247">
    <property type="protein sequence ID" value="ABF40247"/>
    <property type="gene ID" value="Acid345_1245"/>
</dbReference>
<dbReference type="KEGG" id="aba:Acid345_1245"/>
<dbReference type="eggNOG" id="COG0200">
    <property type="taxonomic scope" value="Bacteria"/>
</dbReference>
<dbReference type="HOGENOM" id="CLU_055188_4_2_0"/>
<dbReference type="OrthoDB" id="9810293at2"/>
<dbReference type="Proteomes" id="UP000002432">
    <property type="component" value="Chromosome"/>
</dbReference>
<dbReference type="GO" id="GO:0022625">
    <property type="term" value="C:cytosolic large ribosomal subunit"/>
    <property type="evidence" value="ECO:0007669"/>
    <property type="project" value="TreeGrafter"/>
</dbReference>
<dbReference type="GO" id="GO:0019843">
    <property type="term" value="F:rRNA binding"/>
    <property type="evidence" value="ECO:0007669"/>
    <property type="project" value="UniProtKB-UniRule"/>
</dbReference>
<dbReference type="GO" id="GO:0003735">
    <property type="term" value="F:structural constituent of ribosome"/>
    <property type="evidence" value="ECO:0007669"/>
    <property type="project" value="InterPro"/>
</dbReference>
<dbReference type="GO" id="GO:0006412">
    <property type="term" value="P:translation"/>
    <property type="evidence" value="ECO:0007669"/>
    <property type="project" value="UniProtKB-UniRule"/>
</dbReference>
<dbReference type="Gene3D" id="3.100.10.10">
    <property type="match status" value="1"/>
</dbReference>
<dbReference type="HAMAP" id="MF_01341">
    <property type="entry name" value="Ribosomal_uL15"/>
    <property type="match status" value="1"/>
</dbReference>
<dbReference type="InterPro" id="IPR030878">
    <property type="entry name" value="Ribosomal_uL15"/>
</dbReference>
<dbReference type="InterPro" id="IPR021131">
    <property type="entry name" value="Ribosomal_uL15/eL18"/>
</dbReference>
<dbReference type="InterPro" id="IPR036227">
    <property type="entry name" value="Ribosomal_uL15/eL18_sf"/>
</dbReference>
<dbReference type="InterPro" id="IPR005749">
    <property type="entry name" value="Ribosomal_uL15_bac-type"/>
</dbReference>
<dbReference type="InterPro" id="IPR001196">
    <property type="entry name" value="Ribosomal_uL15_CS"/>
</dbReference>
<dbReference type="NCBIfam" id="TIGR01071">
    <property type="entry name" value="rplO_bact"/>
    <property type="match status" value="1"/>
</dbReference>
<dbReference type="PANTHER" id="PTHR12934">
    <property type="entry name" value="50S RIBOSOMAL PROTEIN L15"/>
    <property type="match status" value="1"/>
</dbReference>
<dbReference type="PANTHER" id="PTHR12934:SF11">
    <property type="entry name" value="LARGE RIBOSOMAL SUBUNIT PROTEIN UL15M"/>
    <property type="match status" value="1"/>
</dbReference>
<dbReference type="Pfam" id="PF00828">
    <property type="entry name" value="Ribosomal_L27A"/>
    <property type="match status" value="1"/>
</dbReference>
<dbReference type="SUPFAM" id="SSF52080">
    <property type="entry name" value="Ribosomal proteins L15p and L18e"/>
    <property type="match status" value="1"/>
</dbReference>
<dbReference type="PROSITE" id="PS00475">
    <property type="entry name" value="RIBOSOMAL_L15"/>
    <property type="match status" value="1"/>
</dbReference>
<comment type="function">
    <text evidence="1">Binds to the 23S rRNA.</text>
</comment>
<comment type="subunit">
    <text evidence="1">Part of the 50S ribosomal subunit.</text>
</comment>
<comment type="similarity">
    <text evidence="1">Belongs to the universal ribosomal protein uL15 family.</text>
</comment>
<organism>
    <name type="scientific">Koribacter versatilis (strain Ellin345)</name>
    <dbReference type="NCBI Taxonomy" id="204669"/>
    <lineage>
        <taxon>Bacteria</taxon>
        <taxon>Pseudomonadati</taxon>
        <taxon>Acidobacteriota</taxon>
        <taxon>Terriglobia</taxon>
        <taxon>Terriglobales</taxon>
        <taxon>Candidatus Korobacteraceae</taxon>
        <taxon>Candidatus Korobacter</taxon>
    </lineage>
</organism>
<name>RL15_KORVE</name>
<protein>
    <recommendedName>
        <fullName evidence="1">Large ribosomal subunit protein uL15</fullName>
    </recommendedName>
    <alternativeName>
        <fullName evidence="3">50S ribosomal protein L15</fullName>
    </alternativeName>
</protein>
<proteinExistence type="inferred from homology"/>
<keyword id="KW-1185">Reference proteome</keyword>
<keyword id="KW-0687">Ribonucleoprotein</keyword>
<keyword id="KW-0689">Ribosomal protein</keyword>
<keyword id="KW-0694">RNA-binding</keyword>
<keyword id="KW-0699">rRNA-binding</keyword>
<reference key="1">
    <citation type="journal article" date="2009" name="Appl. Environ. Microbiol.">
        <title>Three genomes from the phylum Acidobacteria provide insight into the lifestyles of these microorganisms in soils.</title>
        <authorList>
            <person name="Ward N.L."/>
            <person name="Challacombe J.F."/>
            <person name="Janssen P.H."/>
            <person name="Henrissat B."/>
            <person name="Coutinho P.M."/>
            <person name="Wu M."/>
            <person name="Xie G."/>
            <person name="Haft D.H."/>
            <person name="Sait M."/>
            <person name="Badger J."/>
            <person name="Barabote R.D."/>
            <person name="Bradley B."/>
            <person name="Brettin T.S."/>
            <person name="Brinkac L.M."/>
            <person name="Bruce D."/>
            <person name="Creasy T."/>
            <person name="Daugherty S.C."/>
            <person name="Davidsen T.M."/>
            <person name="DeBoy R.T."/>
            <person name="Detter J.C."/>
            <person name="Dodson R.J."/>
            <person name="Durkin A.S."/>
            <person name="Ganapathy A."/>
            <person name="Gwinn-Giglio M."/>
            <person name="Han C.S."/>
            <person name="Khouri H."/>
            <person name="Kiss H."/>
            <person name="Kothari S.P."/>
            <person name="Madupu R."/>
            <person name="Nelson K.E."/>
            <person name="Nelson W.C."/>
            <person name="Paulsen I."/>
            <person name="Penn K."/>
            <person name="Ren Q."/>
            <person name="Rosovitz M.J."/>
            <person name="Selengut J.D."/>
            <person name="Shrivastava S."/>
            <person name="Sullivan S.A."/>
            <person name="Tapia R."/>
            <person name="Thompson L.S."/>
            <person name="Watkins K.L."/>
            <person name="Yang Q."/>
            <person name="Yu C."/>
            <person name="Zafar N."/>
            <person name="Zhou L."/>
            <person name="Kuske C.R."/>
        </authorList>
    </citation>
    <scope>NUCLEOTIDE SEQUENCE [LARGE SCALE GENOMIC DNA]</scope>
    <source>
        <strain>Ellin345</strain>
    </source>
</reference>
<feature type="chain" id="PRO_0000251483" description="Large ribosomal subunit protein uL15">
    <location>
        <begin position="1"/>
        <end position="144"/>
    </location>
</feature>
<feature type="region of interest" description="Disordered" evidence="2">
    <location>
        <begin position="1"/>
        <end position="58"/>
    </location>
</feature>
<feature type="compositionally biased region" description="Basic residues" evidence="2">
    <location>
        <begin position="8"/>
        <end position="20"/>
    </location>
</feature>
<feature type="compositionally biased region" description="Low complexity" evidence="2">
    <location>
        <begin position="40"/>
        <end position="49"/>
    </location>
</feature>